<feature type="chain" id="PRO_0000423876" description="Rap guanine nucleotide exchange factor">
    <location>
        <begin position="1"/>
        <end position="1470"/>
    </location>
</feature>
<feature type="domain" description="N-terminal Ras-GEF" evidence="1">
    <location>
        <begin position="478"/>
        <end position="592"/>
    </location>
</feature>
<feature type="domain" description="PDZ" evidence="2">
    <location>
        <begin position="597"/>
        <end position="679"/>
    </location>
</feature>
<feature type="domain" description="Ras-associating" evidence="3">
    <location>
        <begin position="782"/>
        <end position="869"/>
    </location>
</feature>
<feature type="domain" description="Ras-GEF" evidence="4">
    <location>
        <begin position="894"/>
        <end position="1124"/>
    </location>
</feature>
<feature type="region of interest" description="Disordered" evidence="5">
    <location>
        <begin position="130"/>
        <end position="227"/>
    </location>
</feature>
<feature type="region of interest" description="Disordered" evidence="5">
    <location>
        <begin position="250"/>
        <end position="313"/>
    </location>
</feature>
<feature type="region of interest" description="Disordered" evidence="5">
    <location>
        <begin position="1176"/>
        <end position="1213"/>
    </location>
</feature>
<feature type="region of interest" description="Disordered" evidence="5">
    <location>
        <begin position="1253"/>
        <end position="1326"/>
    </location>
</feature>
<feature type="region of interest" description="Disordered" evidence="5">
    <location>
        <begin position="1347"/>
        <end position="1370"/>
    </location>
</feature>
<feature type="region of interest" description="Disordered" evidence="5">
    <location>
        <begin position="1422"/>
        <end position="1455"/>
    </location>
</feature>
<feature type="compositionally biased region" description="Pro residues" evidence="5">
    <location>
        <begin position="173"/>
        <end position="183"/>
    </location>
</feature>
<feature type="compositionally biased region" description="Low complexity" evidence="5">
    <location>
        <begin position="184"/>
        <end position="193"/>
    </location>
</feature>
<feature type="compositionally biased region" description="Low complexity" evidence="5">
    <location>
        <begin position="215"/>
        <end position="224"/>
    </location>
</feature>
<feature type="compositionally biased region" description="Polar residues" evidence="5">
    <location>
        <begin position="256"/>
        <end position="266"/>
    </location>
</feature>
<feature type="compositionally biased region" description="Low complexity" evidence="5">
    <location>
        <begin position="275"/>
        <end position="292"/>
    </location>
</feature>
<feature type="compositionally biased region" description="Polar residues" evidence="5">
    <location>
        <begin position="1176"/>
        <end position="1189"/>
    </location>
</feature>
<feature type="compositionally biased region" description="Low complexity" evidence="5">
    <location>
        <begin position="1198"/>
        <end position="1211"/>
    </location>
</feature>
<feature type="compositionally biased region" description="Polar residues" evidence="5">
    <location>
        <begin position="1260"/>
        <end position="1274"/>
    </location>
</feature>
<feature type="compositionally biased region" description="Polar residues" evidence="5">
    <location>
        <begin position="1282"/>
        <end position="1308"/>
    </location>
</feature>
<feature type="compositionally biased region" description="Basic and acidic residues" evidence="5">
    <location>
        <begin position="1309"/>
        <end position="1321"/>
    </location>
</feature>
<feature type="compositionally biased region" description="Low complexity" evidence="5">
    <location>
        <begin position="1349"/>
        <end position="1370"/>
    </location>
</feature>
<feature type="binding site">
    <location>
        <begin position="347"/>
        <end position="463"/>
    </location>
    <ligand>
        <name>a nucleoside 3',5'-cyclic phosphate</name>
        <dbReference type="ChEBI" id="CHEBI:58464"/>
    </ligand>
</feature>
<feature type="splice variant" id="VSP_053271" description="In isoform d." evidence="7">
    <location>
        <begin position="1"/>
        <end position="123"/>
    </location>
</feature>
<feature type="splice variant" id="VSP_053269" description="In isoform b." evidence="7">
    <original>NGR</original>
    <variation>VLI</variation>
    <location>
        <begin position="1309"/>
        <end position="1311"/>
    </location>
</feature>
<feature type="splice variant" id="VSP_053270" description="In isoform b." evidence="7">
    <location>
        <begin position="1312"/>
        <end position="1470"/>
    </location>
</feature>
<sequence length="1470" mass="163808">MDPRKPRQDPVNDARFYESLIKPPHLRTPDDIRNVYEQLRQLDTFSNLFIGPLKALCKTARYERHPAQYILFRDGDVARSWYILLSGSVFIENQIYMPYGCFGKRTGQNHRRTHNCLLLQESEMIVIDYPTEPQSNGMSPRTPPRGIHHSGEPVHQKTPRKSAPNMSVDSIAMPPPPVPPRPLRLPQTAAKGPAPLPPRGLPRTYPLDFPVDIPTTSSSSSNTSYNDQHRSQVYLNGLSADEDTLVRVKHRREKSNSVGGQAQNGISTARRLRGRSTASSTTTEGETASNEGADSDEDEGSMPSQESSSGGFMDLRDSVRECLEKEPSERNSEDLAVLLDFMQHMSAFAALPMSIKRQLCLKMVFAVVNDAGTVVLAHNEKLDSWSVIVNGCVEVVKPSGERVEYKLGDSFGAEPTPATQIHIGEMRTMVDDCEFVLVEHRDFCSIMSTIGDHIEKDRDGLTGEVVSEVERRTVGTHCGQVLIKGKPDKLIHHLVDERDHNVDPHYVDDFLLTYRVFIRDPTTIFEKLMLWFADSIYRDKVARLVLLWVNNHFNDFETNDEMWNLLERFEGALERDGMHSQLSLLNIACSVKAKPRQVILTRRKDDKMMMRLVGGQESGNSVYVAEVFPDTSAAREGVKRADEMLEVNQQSAKYLSAKKAEDLLTGSLSLTLMLKNNVLGYKETIGKIEHNKPKNGTSRSGAGIPMVIPVHKTSITGKKSSTTSSKSGMMEKLMTILKSSKEDSMDFTDEAKISSADLRPSRSNPDITSISQYYGPVRSECPEHVLKIYRNDQTFKYLPVYKETSAQNVVQLALQEFNMTAEGSPEWSLCECTVTIDGVIKQRRLPPQMENLAERIALNSRYYLKNNSRSEPLVPDELAPELLKEAQTQLLSLNAQVVAAQLTLQDFSVFSAIEPTEFLDNLFKLDSKYGSPKLEEFEQLFNREMWWVATEICTERHVQKRAKLIKKFIKVARYCRDLRNFNSMFAIMSGLDKPAVRRLHSSWERVSSKYIRMLDEIHQLVDPSRNMSKYRQHLAEVAQEPPVVPIYPVIKKDLTFAHDGNATYSEKLINFEKLRLIAKSIRGVMKLSSAPYEIASMAERSGGVVMDALLHMNSFENSNVATMRKGMSGKQNQPRKKVYEQALMVRKVKSYLEGLHVVDNEMELDSMSYDIEPQVQTAHRGANSSSTANIRRVPSPTPSSLSSQSAGSADQSSRHRLLFNGTGSISSAGGGSKFGVESPQAVQKMLSLVQNSKVKGAPPQITSPSTSARSSLQRNMPRVTGRQATSSAQGPVQLNEETSTVTTYYQSDNGRRQRSGSEGRFDNIPPSTFYLTSDGLTVSPRQSLSVVIPTHPHGHSPTSPRCRSRSPASSGCSSFSTIASIAATSMAAAPSAFVSNPYQHHQTVRGHVIGHRPMPIVTSGSATLPNHVSPRGLPPKSRPTILPGSHTNSSSRMGTIKEATFLTSEQVSRV</sequence>
<comment type="function">
    <text evidence="6">Acts as a guanine nucleotide exchange factor for small G protein GTPases like rap-1 and rap-2. Required in the hypodermis, especially in the seam cells, for proper formation of the cuticle.</text>
</comment>
<comment type="interaction">
    <interactant intactId="EBI-2918010">
        <id>G5EDB9</id>
    </interactant>
    <interactant intactId="EBI-2002318">
        <id>Q6BEV5</id>
        <label>R06F6.12</label>
    </interactant>
    <organismsDiffer>false</organismsDiffer>
    <experiments>2</experiments>
</comment>
<comment type="alternative products">
    <event type="alternative splicing"/>
    <isoform>
        <id>G5EDB9-1</id>
        <name>a</name>
        <name>PXF-1-A</name>
        <sequence type="displayed"/>
    </isoform>
    <isoform>
        <id>G5EDB9-2</id>
        <name>b</name>
        <name>PXF-1-B</name>
        <sequence type="described" ref="VSP_053269 VSP_053270"/>
    </isoform>
    <isoform>
        <id>G5EDB9-3</id>
        <name>d</name>
        <name>PXF-1-C</name>
        <sequence type="described" ref="VSP_053271"/>
    </isoform>
</comment>
<comment type="tissue specificity">
    <text evidence="6">Expressed in hermaphrodite-specific neurons (HSNs), oviduct sheath cells and lateral seam cells.</text>
</comment>
<comment type="developmental stage">
    <text evidence="6">Expressed at the comma stage in endodermal precursor and hypodermal cells of the embryo. Expressed in the hypodermis and gut during elongation and larval stages. Expressed in neuronal precursor cells at the comma stage. Expressed in neuronal cells in the head and tail, in cells of the ventral nerve cord and of the pharynx at the L1 hatched larvae stage.</text>
</comment>
<comment type="disruption phenotype">
    <text evidence="6">Beginning in the L2 stage, onward, animals display striking and progressive defects in morphology of the epidermis. Worms show molting defect and exhibit a trail of old cuticle that remains attached to the posterior part of the body. Longitudinal ridges termed alae, which are cuticular structures secreted by lateral hypodermal seam cells, are poorly distinct or interrupted. Sensory rays in males are malformed. Developed a fairly normal gonad but have a strongly reduced fertility. Show uncoordinated movement and an enlarged gut lumen. Died as a 'bag of worms', or alternatively, as a result of a burst vulva.</text>
</comment>
<comment type="similarity">
    <text evidence="8">Belongs to the RAPGEF2 family.</text>
</comment>
<comment type="sequence caution" evidence="8">
    <conflict type="erroneous initiation">
        <sequence resource="EMBL-CDS" id="AAL09435"/>
    </conflict>
    <text>Truncated N-terminus.</text>
</comment>
<organism>
    <name type="scientific">Caenorhabditis elegans</name>
    <dbReference type="NCBI Taxonomy" id="6239"/>
    <lineage>
        <taxon>Eukaryota</taxon>
        <taxon>Metazoa</taxon>
        <taxon>Ecdysozoa</taxon>
        <taxon>Nematoda</taxon>
        <taxon>Chromadorea</taxon>
        <taxon>Rhabditida</taxon>
        <taxon>Rhabditina</taxon>
        <taxon>Rhabditomorpha</taxon>
        <taxon>Rhabditoidea</taxon>
        <taxon>Rhabditidae</taxon>
        <taxon>Peloderinae</taxon>
        <taxon>Caenorhabditis</taxon>
    </lineage>
</organism>
<protein>
    <recommendedName>
        <fullName>Rap guanine nucleotide exchange factor</fullName>
        <shortName>RA-GEF</shortName>
    </recommendedName>
    <alternativeName>
        <fullName>PDZ-domain-containing exchange factor</fullName>
    </alternativeName>
</protein>
<evidence type="ECO:0000255" key="1">
    <source>
        <dbReference type="PROSITE-ProRule" id="PRU00135"/>
    </source>
</evidence>
<evidence type="ECO:0000255" key="2">
    <source>
        <dbReference type="PROSITE-ProRule" id="PRU00143"/>
    </source>
</evidence>
<evidence type="ECO:0000255" key="3">
    <source>
        <dbReference type="PROSITE-ProRule" id="PRU00166"/>
    </source>
</evidence>
<evidence type="ECO:0000255" key="4">
    <source>
        <dbReference type="PROSITE-ProRule" id="PRU00168"/>
    </source>
</evidence>
<evidence type="ECO:0000256" key="5">
    <source>
        <dbReference type="SAM" id="MobiDB-lite"/>
    </source>
</evidence>
<evidence type="ECO:0000269" key="6">
    <source>
    </source>
</evidence>
<evidence type="ECO:0000303" key="7">
    <source>
    </source>
</evidence>
<evidence type="ECO:0000305" key="8"/>
<keyword id="KW-0025">Alternative splicing</keyword>
<keyword id="KW-0343">GTPase activation</keyword>
<keyword id="KW-0344">Guanine-nucleotide releasing factor</keyword>
<keyword id="KW-1185">Reference proteome</keyword>
<proteinExistence type="evidence at protein level"/>
<accession>G5EDB9</accession>
<accession>G5EBY1</accession>
<accession>G5EEX2</accession>
<reference key="1">
    <citation type="journal article" date="1999" name="J. Biol. Chem.">
        <title>RA-GEF, a novel Rap1A guanine nucleotide exchange factor containing a Ras/Rap1A-associating domain, is conserved between nematode and humans.</title>
        <authorList>
            <person name="Liao Y."/>
            <person name="Kariya K."/>
            <person name="Hu C.-D."/>
            <person name="Shibatohge M."/>
            <person name="Goshima M."/>
            <person name="Okada T."/>
            <person name="Watari Y."/>
            <person name="Gao X."/>
            <person name="Jin T.-G."/>
            <person name="Yamawaki-Kataoka Y."/>
            <person name="Kataoka T."/>
        </authorList>
    </citation>
    <scope>NUCLEOTIDE SEQUENCE [MRNA] (ISOFORM A)</scope>
    <scope>POSSIBLE FUNCTION</scope>
    <source>
        <strain>Bristol N2</strain>
    </source>
</reference>
<reference key="2">
    <citation type="journal article" date="2005" name="Mol. Biol. Cell">
        <title>Requirement of the Caenorhabditis elegans RapGEF pxf-1 and rap-1 for epithelial integrity.</title>
        <authorList>
            <person name="Berkel W.P."/>
            <person name="Verheijen M.H."/>
            <person name="Cuppen E."/>
            <person name="Asahina M."/>
            <person name="de Rooij J."/>
            <person name="Jansen G."/>
            <person name="Plasterk R.H."/>
            <person name="Bos J.L."/>
            <person name="Zwartkruis F.J."/>
        </authorList>
    </citation>
    <scope>NUCLEOTIDE SEQUENCE [MRNA] (ISOFORMS A; B AND D)</scope>
    <scope>FUNCTION</scope>
    <scope>TISSUE SPECIFICITY</scope>
    <scope>DEVELOPMENTAL STAGE</scope>
    <scope>DISRUPTION PHENOTYPE</scope>
</reference>
<reference key="3">
    <citation type="journal article" date="1998" name="Science">
        <title>Genome sequence of the nematode C. elegans: a platform for investigating biology.</title>
        <authorList>
            <consortium name="The C. elegans sequencing consortium"/>
        </authorList>
    </citation>
    <scope>NUCLEOTIDE SEQUENCE [LARGE SCALE GENOMIC DNA]</scope>
    <source>
        <strain>Bristol N2</strain>
    </source>
</reference>
<name>RPGF_CAEEL</name>
<gene>
    <name type="primary">pxf-1</name>
    <name type="synonym">ra-gef</name>
    <name type="ORF">T14G10.2</name>
</gene>
<dbReference type="EMBL" id="AF170796">
    <property type="protein sequence ID" value="AAF22963.1"/>
    <property type="molecule type" value="mRNA"/>
</dbReference>
<dbReference type="EMBL" id="AF308447">
    <property type="protein sequence ID" value="AAL09433.1"/>
    <property type="molecule type" value="mRNA"/>
</dbReference>
<dbReference type="EMBL" id="AF308448">
    <property type="protein sequence ID" value="AAL09434.1"/>
    <property type="molecule type" value="mRNA"/>
</dbReference>
<dbReference type="EMBL" id="AF308449">
    <property type="protein sequence ID" value="AAL09435.1"/>
    <property type="status" value="ALT_INIT"/>
    <property type="molecule type" value="mRNA"/>
</dbReference>
<dbReference type="EMBL" id="Z68880">
    <property type="protein sequence ID" value="CAA93100.2"/>
    <property type="molecule type" value="Genomic_DNA"/>
</dbReference>
<dbReference type="EMBL" id="Z69664">
    <property type="protein sequence ID" value="CAA93100.2"/>
    <property type="status" value="JOINED"/>
    <property type="molecule type" value="Genomic_DNA"/>
</dbReference>
<dbReference type="EMBL" id="Z68880">
    <property type="protein sequence ID" value="CAC42342.1"/>
    <property type="molecule type" value="Genomic_DNA"/>
</dbReference>
<dbReference type="EMBL" id="Z68880">
    <property type="protein sequence ID" value="CCD31121.1"/>
    <property type="molecule type" value="Genomic_DNA"/>
</dbReference>
<dbReference type="PIR" id="T23314">
    <property type="entry name" value="T23314"/>
</dbReference>
<dbReference type="RefSeq" id="NP_001023389.1">
    <molecule id="G5EDB9-1"/>
    <property type="nucleotide sequence ID" value="NM_001028218.6"/>
</dbReference>
<dbReference type="RefSeq" id="NP_001023390.1">
    <molecule id="G5EDB9-2"/>
    <property type="nucleotide sequence ID" value="NM_001028219.3"/>
</dbReference>
<dbReference type="RefSeq" id="NP_001255465.1">
    <molecule id="G5EDB9-3"/>
    <property type="nucleotide sequence ID" value="NM_001268536.3"/>
</dbReference>
<dbReference type="SMR" id="G5EDB9"/>
<dbReference type="BioGRID" id="42996">
    <property type="interactions" value="7"/>
</dbReference>
<dbReference type="FunCoup" id="G5EDB9">
    <property type="interactions" value="2475"/>
</dbReference>
<dbReference type="IntAct" id="G5EDB9">
    <property type="interactions" value="5"/>
</dbReference>
<dbReference type="STRING" id="6239.T14G10.2a.1"/>
<dbReference type="PaxDb" id="6239-T14G10.2a.1"/>
<dbReference type="PeptideAtlas" id="G5EDB9"/>
<dbReference type="EnsemblMetazoa" id="T14G10.2a.1">
    <molecule id="G5EDB9-1"/>
    <property type="protein sequence ID" value="T14G10.2a.1"/>
    <property type="gene ID" value="WBGene00004254"/>
</dbReference>
<dbReference type="EnsemblMetazoa" id="T14G10.2b.1">
    <molecule id="G5EDB9-2"/>
    <property type="protein sequence ID" value="T14G10.2b.1"/>
    <property type="gene ID" value="WBGene00004254"/>
</dbReference>
<dbReference type="EnsemblMetazoa" id="T14G10.2b.2">
    <molecule id="G5EDB9-2"/>
    <property type="protein sequence ID" value="T14G10.2b.2"/>
    <property type="gene ID" value="WBGene00004254"/>
</dbReference>
<dbReference type="EnsemblMetazoa" id="T14G10.2b.3">
    <molecule id="G5EDB9-2"/>
    <property type="protein sequence ID" value="T14G10.2b.3"/>
    <property type="gene ID" value="WBGene00004254"/>
</dbReference>
<dbReference type="EnsemblMetazoa" id="T14G10.2b.4">
    <molecule id="G5EDB9-2"/>
    <property type="protein sequence ID" value="T14G10.2b.4"/>
    <property type="gene ID" value="WBGene00004254"/>
</dbReference>
<dbReference type="EnsemblMetazoa" id="T14G10.2b.5">
    <molecule id="G5EDB9-2"/>
    <property type="protein sequence ID" value="T14G10.2b.5"/>
    <property type="gene ID" value="WBGene00004254"/>
</dbReference>
<dbReference type="EnsemblMetazoa" id="T14G10.2d.1">
    <molecule id="G5EDB9-3"/>
    <property type="protein sequence ID" value="T14G10.2d.1"/>
    <property type="gene ID" value="WBGene00004254"/>
</dbReference>
<dbReference type="GeneID" id="177894"/>
<dbReference type="KEGG" id="cel:CELE_T14G10.2"/>
<dbReference type="AGR" id="WB:WBGene00004254"/>
<dbReference type="CTD" id="177894"/>
<dbReference type="WormBase" id="T14G10.2a">
    <molecule id="G5EDB9-1"/>
    <property type="protein sequence ID" value="CE28080"/>
    <property type="gene ID" value="WBGene00004254"/>
    <property type="gene designation" value="pxf-1"/>
</dbReference>
<dbReference type="WormBase" id="T14G10.2b">
    <molecule id="G5EDB9-2"/>
    <property type="protein sequence ID" value="CE28081"/>
    <property type="gene ID" value="WBGene00004254"/>
    <property type="gene designation" value="pxf-1"/>
</dbReference>
<dbReference type="WormBase" id="T14G10.2d">
    <molecule id="G5EDB9-3"/>
    <property type="protein sequence ID" value="CE46125"/>
    <property type="gene ID" value="WBGene00004254"/>
    <property type="gene designation" value="pxf-1"/>
</dbReference>
<dbReference type="eggNOG" id="KOG3542">
    <property type="taxonomic scope" value="Eukaryota"/>
</dbReference>
<dbReference type="InParanoid" id="G5EDB9"/>
<dbReference type="OMA" id="SSKYIRM"/>
<dbReference type="OrthoDB" id="21144at2759"/>
<dbReference type="PhylomeDB" id="G5EDB9"/>
<dbReference type="Reactome" id="R-CEL-5673001">
    <property type="pathway name" value="RAF/MAP kinase cascade"/>
</dbReference>
<dbReference type="SignaLink" id="G5EDB9"/>
<dbReference type="PRO" id="PR:G5EDB9"/>
<dbReference type="Proteomes" id="UP000001940">
    <property type="component" value="Chromosome IV"/>
</dbReference>
<dbReference type="Bgee" id="WBGene00004254">
    <property type="expression patterns" value="Expressed in adult organism and 4 other cell types or tissues"/>
</dbReference>
<dbReference type="ExpressionAtlas" id="G5EDB9">
    <property type="expression patterns" value="baseline and differential"/>
</dbReference>
<dbReference type="GO" id="GO:0016324">
    <property type="term" value="C:apical plasma membrane"/>
    <property type="evidence" value="ECO:0000318"/>
    <property type="project" value="GO_Central"/>
</dbReference>
<dbReference type="GO" id="GO:0060102">
    <property type="term" value="C:cuticular extracellular matrix"/>
    <property type="evidence" value="ECO:0000314"/>
    <property type="project" value="WormBase"/>
</dbReference>
<dbReference type="GO" id="GO:0005886">
    <property type="term" value="C:plasma membrane"/>
    <property type="evidence" value="ECO:0000318"/>
    <property type="project" value="GO_Central"/>
</dbReference>
<dbReference type="GO" id="GO:0005096">
    <property type="term" value="F:GTPase activator activity"/>
    <property type="evidence" value="ECO:0007669"/>
    <property type="project" value="UniProtKB-KW"/>
</dbReference>
<dbReference type="GO" id="GO:0005085">
    <property type="term" value="F:guanyl-nucleotide exchange factor activity"/>
    <property type="evidence" value="ECO:0000314"/>
    <property type="project" value="WormBase"/>
</dbReference>
<dbReference type="GO" id="GO:0040002">
    <property type="term" value="P:collagen and cuticulin-based cuticle development"/>
    <property type="evidence" value="ECO:0000315"/>
    <property type="project" value="WormBase"/>
</dbReference>
<dbReference type="GO" id="GO:0008544">
    <property type="term" value="P:epidermis development"/>
    <property type="evidence" value="ECO:0000315"/>
    <property type="project" value="WormBase"/>
</dbReference>
<dbReference type="GO" id="GO:0018996">
    <property type="term" value="P:molting cycle, collagen and cuticulin-based cuticle"/>
    <property type="evidence" value="ECO:0000315"/>
    <property type="project" value="WormBase"/>
</dbReference>
<dbReference type="GO" id="GO:0007265">
    <property type="term" value="P:Ras protein signal transduction"/>
    <property type="evidence" value="ECO:0000318"/>
    <property type="project" value="GO_Central"/>
</dbReference>
<dbReference type="CDD" id="cd00038">
    <property type="entry name" value="CAP_ED"/>
    <property type="match status" value="2"/>
</dbReference>
<dbReference type="CDD" id="cd01785">
    <property type="entry name" value="RA_PDZ-GEF1"/>
    <property type="match status" value="1"/>
</dbReference>
<dbReference type="CDD" id="cd00155">
    <property type="entry name" value="RasGEF"/>
    <property type="match status" value="1"/>
</dbReference>
<dbReference type="CDD" id="cd06224">
    <property type="entry name" value="REM"/>
    <property type="match status" value="1"/>
</dbReference>
<dbReference type="Gene3D" id="2.30.42.10">
    <property type="match status" value="1"/>
</dbReference>
<dbReference type="Gene3D" id="2.60.120.10">
    <property type="entry name" value="Jelly Rolls"/>
    <property type="match status" value="2"/>
</dbReference>
<dbReference type="Gene3D" id="3.10.20.90">
    <property type="entry name" value="Phosphatidylinositol 3-kinase Catalytic Subunit, Chain A, domain 1"/>
    <property type="match status" value="1"/>
</dbReference>
<dbReference type="Gene3D" id="1.10.840.10">
    <property type="entry name" value="Ras guanine-nucleotide exchange factors catalytic domain"/>
    <property type="match status" value="1"/>
</dbReference>
<dbReference type="Gene3D" id="1.20.870.10">
    <property type="entry name" value="Son of sevenless (SoS) protein Chain: S domain 1"/>
    <property type="match status" value="1"/>
</dbReference>
<dbReference type="InterPro" id="IPR000595">
    <property type="entry name" value="cNMP-bd_dom"/>
</dbReference>
<dbReference type="InterPro" id="IPR018490">
    <property type="entry name" value="cNMP-bd_dom_sf"/>
</dbReference>
<dbReference type="InterPro" id="IPR001478">
    <property type="entry name" value="PDZ"/>
</dbReference>
<dbReference type="InterPro" id="IPR036034">
    <property type="entry name" value="PDZ_sf"/>
</dbReference>
<dbReference type="InterPro" id="IPR000159">
    <property type="entry name" value="RA_dom"/>
</dbReference>
<dbReference type="InterPro" id="IPR008937">
    <property type="entry name" value="Ras-like_GEF"/>
</dbReference>
<dbReference type="InterPro" id="IPR000651">
    <property type="entry name" value="Ras-like_Gua-exchang_fac_N"/>
</dbReference>
<dbReference type="InterPro" id="IPR019804">
    <property type="entry name" value="Ras_G-nucl-exch_fac_CS"/>
</dbReference>
<dbReference type="InterPro" id="IPR023578">
    <property type="entry name" value="Ras_GEF_dom_sf"/>
</dbReference>
<dbReference type="InterPro" id="IPR001895">
    <property type="entry name" value="RASGEF_cat_dom"/>
</dbReference>
<dbReference type="InterPro" id="IPR036964">
    <property type="entry name" value="RASGEF_cat_dom_sf"/>
</dbReference>
<dbReference type="InterPro" id="IPR014710">
    <property type="entry name" value="RmlC-like_jellyroll"/>
</dbReference>
<dbReference type="InterPro" id="IPR029071">
    <property type="entry name" value="Ubiquitin-like_domsf"/>
</dbReference>
<dbReference type="PANTHER" id="PTHR23113">
    <property type="entry name" value="GUANINE NUCLEOTIDE EXCHANGE FACTOR"/>
    <property type="match status" value="1"/>
</dbReference>
<dbReference type="PANTHER" id="PTHR23113:SF249">
    <property type="entry name" value="RAP GUANINE NUCLEOTIDE EXCHANGE FACTOR 6"/>
    <property type="match status" value="1"/>
</dbReference>
<dbReference type="Pfam" id="PF00595">
    <property type="entry name" value="PDZ"/>
    <property type="match status" value="1"/>
</dbReference>
<dbReference type="Pfam" id="PF00788">
    <property type="entry name" value="RA"/>
    <property type="match status" value="1"/>
</dbReference>
<dbReference type="Pfam" id="PF00617">
    <property type="entry name" value="RasGEF"/>
    <property type="match status" value="1"/>
</dbReference>
<dbReference type="Pfam" id="PF00618">
    <property type="entry name" value="RasGEF_N"/>
    <property type="match status" value="1"/>
</dbReference>
<dbReference type="SMART" id="SM00100">
    <property type="entry name" value="cNMP"/>
    <property type="match status" value="1"/>
</dbReference>
<dbReference type="SMART" id="SM00228">
    <property type="entry name" value="PDZ"/>
    <property type="match status" value="1"/>
</dbReference>
<dbReference type="SMART" id="SM00314">
    <property type="entry name" value="RA"/>
    <property type="match status" value="1"/>
</dbReference>
<dbReference type="SMART" id="SM00147">
    <property type="entry name" value="RasGEF"/>
    <property type="match status" value="1"/>
</dbReference>
<dbReference type="SMART" id="SM00229">
    <property type="entry name" value="RasGEFN"/>
    <property type="match status" value="1"/>
</dbReference>
<dbReference type="SUPFAM" id="SSF51206">
    <property type="entry name" value="cAMP-binding domain-like"/>
    <property type="match status" value="2"/>
</dbReference>
<dbReference type="SUPFAM" id="SSF50156">
    <property type="entry name" value="PDZ domain-like"/>
    <property type="match status" value="1"/>
</dbReference>
<dbReference type="SUPFAM" id="SSF48366">
    <property type="entry name" value="Ras GEF"/>
    <property type="match status" value="1"/>
</dbReference>
<dbReference type="SUPFAM" id="SSF54236">
    <property type="entry name" value="Ubiquitin-like"/>
    <property type="match status" value="1"/>
</dbReference>
<dbReference type="PROSITE" id="PS50042">
    <property type="entry name" value="CNMP_BINDING_3"/>
    <property type="match status" value="1"/>
</dbReference>
<dbReference type="PROSITE" id="PS50106">
    <property type="entry name" value="PDZ"/>
    <property type="match status" value="1"/>
</dbReference>
<dbReference type="PROSITE" id="PS50200">
    <property type="entry name" value="RA"/>
    <property type="match status" value="1"/>
</dbReference>
<dbReference type="PROSITE" id="PS00720">
    <property type="entry name" value="RASGEF"/>
    <property type="match status" value="1"/>
</dbReference>
<dbReference type="PROSITE" id="PS50009">
    <property type="entry name" value="RASGEF_CAT"/>
    <property type="match status" value="1"/>
</dbReference>
<dbReference type="PROSITE" id="PS50212">
    <property type="entry name" value="RASGEF_NTER"/>
    <property type="match status" value="1"/>
</dbReference>